<protein>
    <recommendedName>
        <fullName>Ubiquinol-cytochrome c reductase iron-sulfur subunit</fullName>
        <ecNumber>7.1.1.8</ecNumber>
    </recommendedName>
    <alternativeName>
        <fullName>Rieske iron-sulfur protein</fullName>
        <shortName>RISP</shortName>
    </alternativeName>
</protein>
<keyword id="KW-0001">2Fe-2S</keyword>
<keyword id="KW-1003">Cell membrane</keyword>
<keyword id="KW-1015">Disulfide bond</keyword>
<keyword id="KW-0249">Electron transport</keyword>
<keyword id="KW-0408">Iron</keyword>
<keyword id="KW-0411">Iron-sulfur</keyword>
<keyword id="KW-0472">Membrane</keyword>
<keyword id="KW-0479">Metal-binding</keyword>
<keyword id="KW-1278">Translocase</keyword>
<keyword id="KW-0812">Transmembrane</keyword>
<keyword id="KW-1133">Transmembrane helix</keyword>
<keyword id="KW-0813">Transport</keyword>
<sequence>MSDTEDNKNKQTTRRDFMVLTASSVAAVGAVCTLWPLVDSLNPSADVLALSSIEVDLSNIAVGQTVTVKWQGKPVFITNRTPDKIAEARAVKMSELIDPETDEARVKAGHDNWLVTIGICTHLGCVPLANQGEYDGWFCPCHGSQYDSSGRVRRGPAPLNLAVPPYTFISDKKIRIG</sequence>
<name>UCRI_RICFE</name>
<gene>
    <name type="primary">petA</name>
    <name type="ordered locus">RF_1010</name>
</gene>
<evidence type="ECO:0000255" key="1"/>
<evidence type="ECO:0000255" key="2">
    <source>
        <dbReference type="PROSITE-ProRule" id="PRU00628"/>
    </source>
</evidence>
<evidence type="ECO:0000305" key="3"/>
<organism>
    <name type="scientific">Rickettsia felis (strain ATCC VR-1525 / URRWXCal2)</name>
    <name type="common">Rickettsia azadi</name>
    <dbReference type="NCBI Taxonomy" id="315456"/>
    <lineage>
        <taxon>Bacteria</taxon>
        <taxon>Pseudomonadati</taxon>
        <taxon>Pseudomonadota</taxon>
        <taxon>Alphaproteobacteria</taxon>
        <taxon>Rickettsiales</taxon>
        <taxon>Rickettsiaceae</taxon>
        <taxon>Rickettsieae</taxon>
        <taxon>Rickettsia</taxon>
        <taxon>spotted fever group</taxon>
    </lineage>
</organism>
<dbReference type="EC" id="7.1.1.8"/>
<dbReference type="EMBL" id="CP000053">
    <property type="protein sequence ID" value="AAY61861.1"/>
    <property type="molecule type" value="Genomic_DNA"/>
</dbReference>
<dbReference type="SMR" id="Q4UKR6"/>
<dbReference type="STRING" id="315456.RF_1010"/>
<dbReference type="KEGG" id="rfe:RF_1010"/>
<dbReference type="eggNOG" id="COG0723">
    <property type="taxonomic scope" value="Bacteria"/>
</dbReference>
<dbReference type="HOGENOM" id="CLU_055690_0_2_5"/>
<dbReference type="OrthoDB" id="9767869at2"/>
<dbReference type="Proteomes" id="UP000008548">
    <property type="component" value="Chromosome"/>
</dbReference>
<dbReference type="GO" id="GO:0005886">
    <property type="term" value="C:plasma membrane"/>
    <property type="evidence" value="ECO:0007669"/>
    <property type="project" value="UniProtKB-SubCell"/>
</dbReference>
<dbReference type="GO" id="GO:0051537">
    <property type="term" value="F:2 iron, 2 sulfur cluster binding"/>
    <property type="evidence" value="ECO:0007669"/>
    <property type="project" value="UniProtKB-KW"/>
</dbReference>
<dbReference type="GO" id="GO:0046872">
    <property type="term" value="F:metal ion binding"/>
    <property type="evidence" value="ECO:0007669"/>
    <property type="project" value="UniProtKB-KW"/>
</dbReference>
<dbReference type="GO" id="GO:0008121">
    <property type="term" value="F:ubiquinol-cytochrome-c reductase activity"/>
    <property type="evidence" value="ECO:0007669"/>
    <property type="project" value="UniProtKB-EC"/>
</dbReference>
<dbReference type="CDD" id="cd03470">
    <property type="entry name" value="Rieske_cytochrome_bc1"/>
    <property type="match status" value="1"/>
</dbReference>
<dbReference type="FunFam" id="2.102.10.10:FF:000001">
    <property type="entry name" value="Cytochrome b-c1 complex subunit Rieske, mitochondrial"/>
    <property type="match status" value="1"/>
</dbReference>
<dbReference type="Gene3D" id="2.102.10.10">
    <property type="entry name" value="Rieske [2Fe-2S] iron-sulphur domain"/>
    <property type="match status" value="1"/>
</dbReference>
<dbReference type="Gene3D" id="1.20.5.510">
    <property type="entry name" value="Single helix bin"/>
    <property type="match status" value="1"/>
</dbReference>
<dbReference type="InterPro" id="IPR017941">
    <property type="entry name" value="Rieske_2Fe-2S"/>
</dbReference>
<dbReference type="InterPro" id="IPR036922">
    <property type="entry name" value="Rieske_2Fe-2S_sf"/>
</dbReference>
<dbReference type="InterPro" id="IPR014349">
    <property type="entry name" value="Rieske_Fe-S_prot"/>
</dbReference>
<dbReference type="InterPro" id="IPR005805">
    <property type="entry name" value="Rieske_Fe-S_prot_C"/>
</dbReference>
<dbReference type="InterPro" id="IPR006311">
    <property type="entry name" value="TAT_signal"/>
</dbReference>
<dbReference type="InterPro" id="IPR019546">
    <property type="entry name" value="TAT_signal_bac_arc"/>
</dbReference>
<dbReference type="InterPro" id="IPR019470">
    <property type="entry name" value="Ubiq_cytC_Rdtase_Fe-S_su_TAT"/>
</dbReference>
<dbReference type="InterPro" id="IPR006317">
    <property type="entry name" value="Ubiquinol_cyt_c_Rdtase_Fe-S-su"/>
</dbReference>
<dbReference type="NCBIfam" id="TIGR01416">
    <property type="entry name" value="Rieske_proteo"/>
    <property type="match status" value="1"/>
</dbReference>
<dbReference type="NCBIfam" id="TIGR01409">
    <property type="entry name" value="TAT_signal_seq"/>
    <property type="match status" value="1"/>
</dbReference>
<dbReference type="PANTHER" id="PTHR10134">
    <property type="entry name" value="CYTOCHROME B-C1 COMPLEX SUBUNIT RIESKE, MITOCHONDRIAL"/>
    <property type="match status" value="1"/>
</dbReference>
<dbReference type="Pfam" id="PF00355">
    <property type="entry name" value="Rieske"/>
    <property type="match status" value="1"/>
</dbReference>
<dbReference type="Pfam" id="PF10399">
    <property type="entry name" value="UCR_Fe-S_N"/>
    <property type="match status" value="1"/>
</dbReference>
<dbReference type="PRINTS" id="PR00162">
    <property type="entry name" value="RIESKE"/>
</dbReference>
<dbReference type="SUPFAM" id="SSF50022">
    <property type="entry name" value="ISP domain"/>
    <property type="match status" value="1"/>
</dbReference>
<dbReference type="PROSITE" id="PS51296">
    <property type="entry name" value="RIESKE"/>
    <property type="match status" value="1"/>
</dbReference>
<dbReference type="PROSITE" id="PS51318">
    <property type="entry name" value="TAT"/>
    <property type="match status" value="1"/>
</dbReference>
<reference key="1">
    <citation type="journal article" date="2005" name="PLoS Biol.">
        <title>The genome sequence of Rickettsia felis identifies the first putative conjugative plasmid in an obligate intracellular parasite.</title>
        <authorList>
            <person name="Ogata H."/>
            <person name="Renesto P."/>
            <person name="Audic S."/>
            <person name="Robert C."/>
            <person name="Blanc G."/>
            <person name="Fournier P.-E."/>
            <person name="Parinello H."/>
            <person name="Claverie J.-M."/>
            <person name="Raoult D."/>
        </authorList>
    </citation>
    <scope>NUCLEOTIDE SEQUENCE [LARGE SCALE GENOMIC DNA]</scope>
    <source>
        <strain>ATCC VR-1525 / URRWXCal2</strain>
    </source>
</reference>
<feature type="chain" id="PRO_0000286643" description="Ubiquinol-cytochrome c reductase iron-sulfur subunit">
    <location>
        <begin position="1"/>
        <end position="177"/>
    </location>
</feature>
<feature type="transmembrane region" description="Helical" evidence="1">
    <location>
        <begin position="18"/>
        <end position="38"/>
    </location>
</feature>
<feature type="domain" description="Rieske" evidence="2">
    <location>
        <begin position="88"/>
        <end position="175"/>
    </location>
</feature>
<feature type="binding site" evidence="2">
    <location>
        <position position="120"/>
    </location>
    <ligand>
        <name>[2Fe-2S] cluster</name>
        <dbReference type="ChEBI" id="CHEBI:190135"/>
    </ligand>
</feature>
<feature type="binding site" evidence="2">
    <location>
        <position position="122"/>
    </location>
    <ligand>
        <name>[2Fe-2S] cluster</name>
        <dbReference type="ChEBI" id="CHEBI:190135"/>
    </ligand>
</feature>
<feature type="binding site" evidence="2">
    <location>
        <position position="139"/>
    </location>
    <ligand>
        <name>[2Fe-2S] cluster</name>
        <dbReference type="ChEBI" id="CHEBI:190135"/>
    </ligand>
</feature>
<feature type="binding site" evidence="2">
    <location>
        <position position="142"/>
    </location>
    <ligand>
        <name>[2Fe-2S] cluster</name>
        <dbReference type="ChEBI" id="CHEBI:190135"/>
    </ligand>
</feature>
<feature type="disulfide bond" evidence="2">
    <location>
        <begin position="125"/>
        <end position="141"/>
    </location>
</feature>
<comment type="function">
    <text>Component of the ubiquinol-cytochrome c reductase complex (complex III or cytochrome b-c1 complex), which is a respiratory chain that generates an electrochemical potential coupled to ATP synthesis.</text>
</comment>
<comment type="catalytic activity">
    <reaction>
        <text>a quinol + 2 Fe(III)-[cytochrome c](out) = a quinone + 2 Fe(II)-[cytochrome c](out) + 2 H(+)(out)</text>
        <dbReference type="Rhea" id="RHEA:11484"/>
        <dbReference type="Rhea" id="RHEA-COMP:10350"/>
        <dbReference type="Rhea" id="RHEA-COMP:14399"/>
        <dbReference type="ChEBI" id="CHEBI:15378"/>
        <dbReference type="ChEBI" id="CHEBI:24646"/>
        <dbReference type="ChEBI" id="CHEBI:29033"/>
        <dbReference type="ChEBI" id="CHEBI:29034"/>
        <dbReference type="ChEBI" id="CHEBI:132124"/>
        <dbReference type="EC" id="7.1.1.8"/>
    </reaction>
</comment>
<comment type="cofactor">
    <cofactor evidence="2">
        <name>[2Fe-2S] cluster</name>
        <dbReference type="ChEBI" id="CHEBI:190135"/>
    </cofactor>
    <text evidence="2">Binds 1 [2Fe-2S] cluster per subunit.</text>
</comment>
<comment type="subunit">
    <text>The main subunits of complex b-c1 are: cytochrome b, cytochrome c1 and the Rieske protein.</text>
</comment>
<comment type="subcellular location">
    <subcellularLocation>
        <location evidence="3">Cell membrane</location>
        <topology evidence="3">Single-pass membrane protein</topology>
    </subcellularLocation>
</comment>
<comment type="miscellaneous">
    <text>The Rieske protein is a high potential 2Fe-2S protein.</text>
</comment>
<comment type="similarity">
    <text evidence="3">Belongs to the Rieske iron-sulfur protein family.</text>
</comment>
<proteinExistence type="inferred from homology"/>
<accession>Q4UKR6</accession>